<proteinExistence type="inferred from homology"/>
<organism>
    <name type="scientific">Rhizobium meliloti (strain 1021)</name>
    <name type="common">Ensifer meliloti</name>
    <name type="synonym">Sinorhizobium meliloti</name>
    <dbReference type="NCBI Taxonomy" id="266834"/>
    <lineage>
        <taxon>Bacteria</taxon>
        <taxon>Pseudomonadati</taxon>
        <taxon>Pseudomonadota</taxon>
        <taxon>Alphaproteobacteria</taxon>
        <taxon>Hyphomicrobiales</taxon>
        <taxon>Rhizobiaceae</taxon>
        <taxon>Sinorhizobium/Ensifer group</taxon>
        <taxon>Sinorhizobium</taxon>
    </lineage>
</organism>
<dbReference type="EC" id="4.2.1.33" evidence="1"/>
<dbReference type="EMBL" id="AL591688">
    <property type="protein sequence ID" value="CAC47757.1"/>
    <property type="molecule type" value="Genomic_DNA"/>
</dbReference>
<dbReference type="RefSeq" id="NP_387284.1">
    <property type="nucleotide sequence ID" value="NC_003047.1"/>
</dbReference>
<dbReference type="RefSeq" id="WP_003531292.1">
    <property type="nucleotide sequence ID" value="NC_003047.1"/>
</dbReference>
<dbReference type="SMR" id="Q92LA1"/>
<dbReference type="EnsemblBacteria" id="CAC47757">
    <property type="protein sequence ID" value="CAC47757"/>
    <property type="gene ID" value="SMc03795"/>
</dbReference>
<dbReference type="KEGG" id="sme:SMc03795"/>
<dbReference type="PATRIC" id="fig|266834.11.peg.4727"/>
<dbReference type="eggNOG" id="COG0066">
    <property type="taxonomic scope" value="Bacteria"/>
</dbReference>
<dbReference type="HOGENOM" id="CLU_081378_0_3_5"/>
<dbReference type="OrthoDB" id="9777465at2"/>
<dbReference type="UniPathway" id="UPA00048">
    <property type="reaction ID" value="UER00071"/>
</dbReference>
<dbReference type="Proteomes" id="UP000001976">
    <property type="component" value="Chromosome"/>
</dbReference>
<dbReference type="GO" id="GO:0009316">
    <property type="term" value="C:3-isopropylmalate dehydratase complex"/>
    <property type="evidence" value="ECO:0007669"/>
    <property type="project" value="InterPro"/>
</dbReference>
<dbReference type="GO" id="GO:0003861">
    <property type="term" value="F:3-isopropylmalate dehydratase activity"/>
    <property type="evidence" value="ECO:0007669"/>
    <property type="project" value="UniProtKB-UniRule"/>
</dbReference>
<dbReference type="GO" id="GO:0009098">
    <property type="term" value="P:L-leucine biosynthetic process"/>
    <property type="evidence" value="ECO:0007669"/>
    <property type="project" value="UniProtKB-UniRule"/>
</dbReference>
<dbReference type="CDD" id="cd01577">
    <property type="entry name" value="IPMI_Swivel"/>
    <property type="match status" value="1"/>
</dbReference>
<dbReference type="FunFam" id="3.20.19.10:FF:000003">
    <property type="entry name" value="3-isopropylmalate dehydratase small subunit"/>
    <property type="match status" value="1"/>
</dbReference>
<dbReference type="Gene3D" id="3.20.19.10">
    <property type="entry name" value="Aconitase, domain 4"/>
    <property type="match status" value="1"/>
</dbReference>
<dbReference type="HAMAP" id="MF_01031">
    <property type="entry name" value="LeuD_type1"/>
    <property type="match status" value="1"/>
</dbReference>
<dbReference type="InterPro" id="IPR004431">
    <property type="entry name" value="3-IsopropMal_deHydase_ssu"/>
</dbReference>
<dbReference type="InterPro" id="IPR015928">
    <property type="entry name" value="Aconitase/3IPM_dehydase_swvl"/>
</dbReference>
<dbReference type="InterPro" id="IPR000573">
    <property type="entry name" value="AconitaseA/IPMdHydase_ssu_swvl"/>
</dbReference>
<dbReference type="InterPro" id="IPR033940">
    <property type="entry name" value="IPMI_Swivel"/>
</dbReference>
<dbReference type="InterPro" id="IPR050075">
    <property type="entry name" value="LeuD"/>
</dbReference>
<dbReference type="NCBIfam" id="TIGR00171">
    <property type="entry name" value="leuD"/>
    <property type="match status" value="1"/>
</dbReference>
<dbReference type="NCBIfam" id="NF002458">
    <property type="entry name" value="PRK01641.1"/>
    <property type="match status" value="1"/>
</dbReference>
<dbReference type="PANTHER" id="PTHR43345:SF5">
    <property type="entry name" value="3-ISOPROPYLMALATE DEHYDRATASE SMALL SUBUNIT"/>
    <property type="match status" value="1"/>
</dbReference>
<dbReference type="PANTHER" id="PTHR43345">
    <property type="entry name" value="3-ISOPROPYLMALATE DEHYDRATASE SMALL SUBUNIT 2-RELATED-RELATED"/>
    <property type="match status" value="1"/>
</dbReference>
<dbReference type="Pfam" id="PF00694">
    <property type="entry name" value="Aconitase_C"/>
    <property type="match status" value="1"/>
</dbReference>
<dbReference type="SUPFAM" id="SSF52016">
    <property type="entry name" value="LeuD/IlvD-like"/>
    <property type="match status" value="1"/>
</dbReference>
<protein>
    <recommendedName>
        <fullName evidence="1">3-isopropylmalate dehydratase small subunit</fullName>
        <ecNumber evidence="1">4.2.1.33</ecNumber>
    </recommendedName>
    <alternativeName>
        <fullName evidence="1">Alpha-IPM isomerase</fullName>
        <shortName evidence="1">IPMI</shortName>
    </alternativeName>
    <alternativeName>
        <fullName evidence="1">Isopropylmalate isomerase</fullName>
    </alternativeName>
</protein>
<comment type="function">
    <text evidence="1">Catalyzes the isomerization between 2-isopropylmalate and 3-isopropylmalate, via the formation of 2-isopropylmaleate.</text>
</comment>
<comment type="catalytic activity">
    <reaction evidence="1">
        <text>(2R,3S)-3-isopropylmalate = (2S)-2-isopropylmalate</text>
        <dbReference type="Rhea" id="RHEA:32287"/>
        <dbReference type="ChEBI" id="CHEBI:1178"/>
        <dbReference type="ChEBI" id="CHEBI:35121"/>
        <dbReference type="EC" id="4.2.1.33"/>
    </reaction>
</comment>
<comment type="pathway">
    <text evidence="1">Amino-acid biosynthesis; L-leucine biosynthesis; L-leucine from 3-methyl-2-oxobutanoate: step 2/4.</text>
</comment>
<comment type="subunit">
    <text evidence="1">Heterodimer of LeuC and LeuD.</text>
</comment>
<comment type="similarity">
    <text evidence="1">Belongs to the LeuD family. LeuD type 1 subfamily.</text>
</comment>
<gene>
    <name evidence="1" type="primary">leuD</name>
    <name type="ordered locus">R03178</name>
    <name type="ORF">SMc03795</name>
</gene>
<feature type="chain" id="PRO_0000141868" description="3-isopropylmalate dehydratase small subunit">
    <location>
        <begin position="1"/>
        <end position="201"/>
    </location>
</feature>
<reference key="1">
    <citation type="journal article" date="2001" name="Proc. Natl. Acad. Sci. U.S.A.">
        <title>Analysis of the chromosome sequence of the legume symbiont Sinorhizobium meliloti strain 1021.</title>
        <authorList>
            <person name="Capela D."/>
            <person name="Barloy-Hubler F."/>
            <person name="Gouzy J."/>
            <person name="Bothe G."/>
            <person name="Ampe F."/>
            <person name="Batut J."/>
            <person name="Boistard P."/>
            <person name="Becker A."/>
            <person name="Boutry M."/>
            <person name="Cadieu E."/>
            <person name="Dreano S."/>
            <person name="Gloux S."/>
            <person name="Godrie T."/>
            <person name="Goffeau A."/>
            <person name="Kahn D."/>
            <person name="Kiss E."/>
            <person name="Lelaure V."/>
            <person name="Masuy D."/>
            <person name="Pohl T."/>
            <person name="Portetelle D."/>
            <person name="Puehler A."/>
            <person name="Purnelle B."/>
            <person name="Ramsperger U."/>
            <person name="Renard C."/>
            <person name="Thebault P."/>
            <person name="Vandenbol M."/>
            <person name="Weidner S."/>
            <person name="Galibert F."/>
        </authorList>
    </citation>
    <scope>NUCLEOTIDE SEQUENCE [LARGE SCALE GENOMIC DNA]</scope>
    <source>
        <strain>1021</strain>
    </source>
</reference>
<reference key="2">
    <citation type="journal article" date="2001" name="Science">
        <title>The composite genome of the legume symbiont Sinorhizobium meliloti.</title>
        <authorList>
            <person name="Galibert F."/>
            <person name="Finan T.M."/>
            <person name="Long S.R."/>
            <person name="Puehler A."/>
            <person name="Abola P."/>
            <person name="Ampe F."/>
            <person name="Barloy-Hubler F."/>
            <person name="Barnett M.J."/>
            <person name="Becker A."/>
            <person name="Boistard P."/>
            <person name="Bothe G."/>
            <person name="Boutry M."/>
            <person name="Bowser L."/>
            <person name="Buhrmester J."/>
            <person name="Cadieu E."/>
            <person name="Capela D."/>
            <person name="Chain P."/>
            <person name="Cowie A."/>
            <person name="Davis R.W."/>
            <person name="Dreano S."/>
            <person name="Federspiel N.A."/>
            <person name="Fisher R.F."/>
            <person name="Gloux S."/>
            <person name="Godrie T."/>
            <person name="Goffeau A."/>
            <person name="Golding B."/>
            <person name="Gouzy J."/>
            <person name="Gurjal M."/>
            <person name="Hernandez-Lucas I."/>
            <person name="Hong A."/>
            <person name="Huizar L."/>
            <person name="Hyman R.W."/>
            <person name="Jones T."/>
            <person name="Kahn D."/>
            <person name="Kahn M.L."/>
            <person name="Kalman S."/>
            <person name="Keating D.H."/>
            <person name="Kiss E."/>
            <person name="Komp C."/>
            <person name="Lelaure V."/>
            <person name="Masuy D."/>
            <person name="Palm C."/>
            <person name="Peck M.C."/>
            <person name="Pohl T.M."/>
            <person name="Portetelle D."/>
            <person name="Purnelle B."/>
            <person name="Ramsperger U."/>
            <person name="Surzycki R."/>
            <person name="Thebault P."/>
            <person name="Vandenbol M."/>
            <person name="Vorhoelter F.J."/>
            <person name="Weidner S."/>
            <person name="Wells D.H."/>
            <person name="Wong K."/>
            <person name="Yeh K.-C."/>
            <person name="Batut J."/>
        </authorList>
    </citation>
    <scope>NUCLEOTIDE SEQUENCE [LARGE SCALE GENOMIC DNA]</scope>
    <source>
        <strain>1021</strain>
    </source>
</reference>
<sequence>MDKFVKLTGVAAPLPVVNIDTDMIIPKDYLKTIKRTGLGTGLFAEARYNEDGTPNPDFVLNKPAYQNAKILVAGDNFGCGSSREHAPWALLDFGIRCVISTSFADIFYNNCFKNGILPIVVSQEDLDKLMDDASRGSNAILTVDLEAQEITGPDGGSIKFEVDAFKRHCLLNGLDDIGLTLEKGGSIDNYEKATAASRPWA</sequence>
<name>LEUD_RHIME</name>
<keyword id="KW-0028">Amino-acid biosynthesis</keyword>
<keyword id="KW-0100">Branched-chain amino acid biosynthesis</keyword>
<keyword id="KW-0432">Leucine biosynthesis</keyword>
<keyword id="KW-0456">Lyase</keyword>
<keyword id="KW-1185">Reference proteome</keyword>
<accession>Q92LA1</accession>
<evidence type="ECO:0000255" key="1">
    <source>
        <dbReference type="HAMAP-Rule" id="MF_01031"/>
    </source>
</evidence>